<gene>
    <name evidence="5" type="primary">TREX1</name>
</gene>
<name>TREX1_BOVIN</name>
<comment type="function">
    <text evidence="2 4">Major cellular 3'-to-5' DNA exonuclease which digests single-stranded DNA (ssDNA) and double-stranded DNA (dsDNA) with mismatched 3' termini (PubMed:10391904). Prevents cell-intrinsic initiation of autoimmunity (By similarity). Acts by metabolizing DNA fragments from endogenous retroelements, including L1, LTR and SINE elements (By similarity). Plays a key role in degradation of DNA fragments at cytosolic micronuclei arising from genome instability: its association with the endoplasmic reticulum membrane directs TREX1 to ruptured micronuclei, leading to micronuclear DNA degradation (By similarity). Micronuclear DNA degradation is required to limit CGAS activation and subsequent inflammation (By similarity). Unless degraded, these DNA fragments accumulate in the cytosol and activate the cGAS-STING innate immune signaling, leading to the production of type I interferon (By similarity). Prevents chronic ATM-dependent checkpoint activation, by processing ssDNA polynucleotide species arising from the processing of aberrant DNA replication intermediates (By similarity). Inefficiently degrades oxidized DNA, such as that generated upon antimicrobial reactive oxygen production or upon absorption of UV light (By similarity). During GZMA-mediated cell death, contributes to DNA damage in concert with NME1 (By similarity). NME1 nicks one strand of DNA and TREX1 removes bases from the free 3' end to enhance DNA damage and prevent DNA end reannealing and rapid repair (By similarity).</text>
</comment>
<comment type="catalytic activity">
    <reaction evidence="2">
        <text>Exonucleolytic cleavage in the 3'- to 5'-direction to yield nucleoside 5'-phosphates.</text>
        <dbReference type="EC" id="3.1.11.2"/>
    </reaction>
</comment>
<comment type="cofactor">
    <cofactor evidence="1">
        <name>Mg(2+)</name>
        <dbReference type="ChEBI" id="CHEBI:18420"/>
    </cofactor>
    <text evidence="1">Binds 2 Mg(2+) per subunit. The second magnesium ion interacts with only one residue. Substitution with Mn(2+) results in partial activity.</text>
</comment>
<comment type="subunit">
    <text evidence="1 2 4">Homodimer (PubMed:10391904). Interacts (via proline-rich region) with TCERG1/CA150 (via the second WW domain) (By similarity). Component of the SET complex, composed of at least ANP32A, APEX1, HMGB2, NME1, SET and TREX1 (By similarity). Within this complex, directly interacts with SET; this interaction does not result in TREX1 inhibition (By similarity). Also interacts with NME1, but only following translocation to the nucleus (By similarity). Directly interacts with UBQLN1 (via ubiquitin-like domain); the interaction may control TREX1 subcellular location (By similarity).</text>
</comment>
<comment type="subcellular location">
    <subcellularLocation>
        <location evidence="2">Nucleus</location>
    </subcellularLocation>
    <subcellularLocation>
        <location evidence="2">Cytoplasm</location>
        <location evidence="2">Cytosol</location>
    </subcellularLocation>
    <subcellularLocation>
        <location evidence="2">Endoplasmic reticulum membrane</location>
        <topology evidence="2">Peripheral membrane protein</topology>
    </subcellularLocation>
    <text evidence="1 2">Retained in the cytoplasm through the C-terminal region (By similarity). Localization to the endoplasmic reticulum membrane is required to direct TREX1 to ruptured micronuclei. In response to DNA damage, translocates to the nucleus where it is specifically recruited to replication foci. Translocation to the nucleus also occurs during GZMA-mediated cell death (By similarity).</text>
</comment>
<comment type="PTM">
    <text evidence="2">Ubiquitinated, but not targeted to proteasomal degradation. Ubiquitination may be important for interaction with UBQLN1.</text>
</comment>
<comment type="similarity">
    <text evidence="6">Belongs to the exonuclease superfamily. TREX family.</text>
</comment>
<organism>
    <name type="scientific">Bos taurus</name>
    <name type="common">Bovine</name>
    <dbReference type="NCBI Taxonomy" id="9913"/>
    <lineage>
        <taxon>Eukaryota</taxon>
        <taxon>Metazoa</taxon>
        <taxon>Chordata</taxon>
        <taxon>Craniata</taxon>
        <taxon>Vertebrata</taxon>
        <taxon>Euteleostomi</taxon>
        <taxon>Mammalia</taxon>
        <taxon>Eutheria</taxon>
        <taxon>Laurasiatheria</taxon>
        <taxon>Artiodactyla</taxon>
        <taxon>Ruminantia</taxon>
        <taxon>Pecora</taxon>
        <taxon>Bovidae</taxon>
        <taxon>Bovinae</taxon>
        <taxon>Bos</taxon>
    </lineage>
</organism>
<sequence>MGSRALPPGPVQTLIFLDLEATGLPFSQPKITELCLLAVHRYALEGLSAPQGPSPTAPVPPRVLDKLSLCVAPGKVCSPAASEITGLSTAVLAAHGRRAFDADLVNLIRTFLQRQPQPWCLVAHNGDRYDFPLLRAELALLGLASALDDAFCVDSIAALKALEPTGSSSEHGPRKSYSLGSVYTRLYGQAPPDSHTAEGDVLALLSVCQWRPRALLRWVDAHAKPFSTVKPMYVITTSTGTNPRPSAVTATVPLARASDTGPNLRGDRSPKPAPSPKMCPGAPPGEGLLAPLGLLAFLTLAVAMLYGLSLAMPGQ</sequence>
<proteinExistence type="evidence at protein level"/>
<reference key="1">
    <citation type="journal article" date="1999" name="J. Biol. Chem.">
        <title>Identification and expression of the TREX1 and TREX2 cDNA sequences encoding mammalian 3'--&gt;5' exonucleases.</title>
        <authorList>
            <person name="Mazur D.J."/>
            <person name="Perrino F.W."/>
        </authorList>
    </citation>
    <scope>NUCLEOTIDE SEQUENCE [MRNA]</scope>
    <scope>PROTEIN SEQUENCE OF 42-60; 99-109 AND 161-184</scope>
    <scope>FUNCTION</scope>
    <scope>HOMODIMERIZATION</scope>
    <source>
        <tissue>Thymus</tissue>
    </source>
</reference>
<protein>
    <recommendedName>
        <fullName evidence="6">Three-prime repair exonuclease 1</fullName>
        <ecNumber evidence="2">3.1.11.2</ecNumber>
    </recommendedName>
    <alternativeName>
        <fullName evidence="5">3'-5' exonuclease TREX1</fullName>
    </alternativeName>
</protein>
<dbReference type="EC" id="3.1.11.2" evidence="2"/>
<dbReference type="EMBL" id="AF319575">
    <property type="protein sequence ID" value="AAK07622.1"/>
    <property type="molecule type" value="mRNA"/>
</dbReference>
<dbReference type="SMR" id="Q9BG99"/>
<dbReference type="FunCoup" id="Q9BG99">
    <property type="interactions" value="68"/>
</dbReference>
<dbReference type="STRING" id="9913.ENSBTAP00000011063"/>
<dbReference type="PaxDb" id="9913-ENSBTAP00000011063"/>
<dbReference type="eggNOG" id="KOG4793">
    <property type="taxonomic scope" value="Eukaryota"/>
</dbReference>
<dbReference type="InParanoid" id="Q9BG99"/>
<dbReference type="OrthoDB" id="10250935at2759"/>
<dbReference type="Proteomes" id="UP000009136">
    <property type="component" value="Unplaced"/>
</dbReference>
<dbReference type="GO" id="GO:0005737">
    <property type="term" value="C:cytoplasm"/>
    <property type="evidence" value="ECO:0000318"/>
    <property type="project" value="GO_Central"/>
</dbReference>
<dbReference type="GO" id="GO:0005829">
    <property type="term" value="C:cytosol"/>
    <property type="evidence" value="ECO:0007669"/>
    <property type="project" value="UniProtKB-SubCell"/>
</dbReference>
<dbReference type="GO" id="GO:0005789">
    <property type="term" value="C:endoplasmic reticulum membrane"/>
    <property type="evidence" value="ECO:0000250"/>
    <property type="project" value="UniProtKB"/>
</dbReference>
<dbReference type="GO" id="GO:0005634">
    <property type="term" value="C:nucleus"/>
    <property type="evidence" value="ECO:0007669"/>
    <property type="project" value="UniProtKB-SubCell"/>
</dbReference>
<dbReference type="GO" id="GO:0008408">
    <property type="term" value="F:3'-5' exonuclease activity"/>
    <property type="evidence" value="ECO:0000250"/>
    <property type="project" value="UniProtKB"/>
</dbReference>
<dbReference type="GO" id="GO:0008296">
    <property type="term" value="F:3'-5'-DNA exonuclease activity"/>
    <property type="evidence" value="ECO:0000250"/>
    <property type="project" value="UniProtKB"/>
</dbReference>
<dbReference type="GO" id="GO:0008311">
    <property type="term" value="F:double-stranded DNA 3'-5' DNA exonuclease activity"/>
    <property type="evidence" value="ECO:0007669"/>
    <property type="project" value="UniProtKB-EC"/>
</dbReference>
<dbReference type="GO" id="GO:0046872">
    <property type="term" value="F:metal ion binding"/>
    <property type="evidence" value="ECO:0007669"/>
    <property type="project" value="UniProtKB-KW"/>
</dbReference>
<dbReference type="GO" id="GO:0003676">
    <property type="term" value="F:nucleic acid binding"/>
    <property type="evidence" value="ECO:0007669"/>
    <property type="project" value="InterPro"/>
</dbReference>
<dbReference type="GO" id="GO:0006308">
    <property type="term" value="P:DNA catabolic process"/>
    <property type="evidence" value="ECO:0000318"/>
    <property type="project" value="GO_Central"/>
</dbReference>
<dbReference type="GO" id="GO:0006259">
    <property type="term" value="P:DNA metabolic process"/>
    <property type="evidence" value="ECO:0000250"/>
    <property type="project" value="UniProtKB"/>
</dbReference>
<dbReference type="GO" id="GO:0045824">
    <property type="term" value="P:negative regulation of innate immune response"/>
    <property type="evidence" value="ECO:0000250"/>
    <property type="project" value="UniProtKB"/>
</dbReference>
<dbReference type="CDD" id="cd06136">
    <property type="entry name" value="TREX1_2"/>
    <property type="match status" value="1"/>
</dbReference>
<dbReference type="FunFam" id="3.30.420.10:FF:000046">
    <property type="entry name" value="Three prime repair exonuclease 1"/>
    <property type="match status" value="1"/>
</dbReference>
<dbReference type="Gene3D" id="3.30.420.10">
    <property type="entry name" value="Ribonuclease H-like superfamily/Ribonuclease H"/>
    <property type="match status" value="1"/>
</dbReference>
<dbReference type="InterPro" id="IPR013520">
    <property type="entry name" value="Exonuclease_RNaseT/DNA_pol3"/>
</dbReference>
<dbReference type="InterPro" id="IPR012337">
    <property type="entry name" value="RNaseH-like_sf"/>
</dbReference>
<dbReference type="InterPro" id="IPR036397">
    <property type="entry name" value="RNaseH_sf"/>
</dbReference>
<dbReference type="InterPro" id="IPR040393">
    <property type="entry name" value="TREX1/2"/>
</dbReference>
<dbReference type="PANTHER" id="PTHR13058">
    <property type="entry name" value="THREE PRIME REPAIR EXONUCLEASE 1, 2"/>
    <property type="match status" value="1"/>
</dbReference>
<dbReference type="PANTHER" id="PTHR13058:SF27">
    <property type="entry name" value="THREE-PRIME REPAIR EXONUCLEASE 1"/>
    <property type="match status" value="1"/>
</dbReference>
<dbReference type="SMART" id="SM00479">
    <property type="entry name" value="EXOIII"/>
    <property type="match status" value="1"/>
</dbReference>
<dbReference type="SUPFAM" id="SSF53098">
    <property type="entry name" value="Ribonuclease H-like"/>
    <property type="match status" value="1"/>
</dbReference>
<accession>Q9BG99</accession>
<evidence type="ECO:0000250" key="1">
    <source>
        <dbReference type="UniProtKB" id="Q91XB0"/>
    </source>
</evidence>
<evidence type="ECO:0000250" key="2">
    <source>
        <dbReference type="UniProtKB" id="Q9NSU2"/>
    </source>
</evidence>
<evidence type="ECO:0000256" key="3">
    <source>
        <dbReference type="SAM" id="MobiDB-lite"/>
    </source>
</evidence>
<evidence type="ECO:0000269" key="4">
    <source>
    </source>
</evidence>
<evidence type="ECO:0000303" key="5">
    <source>
    </source>
</evidence>
<evidence type="ECO:0000305" key="6"/>
<feature type="chain" id="PRO_0000109867" description="Three-prime repair exonuclease 1">
    <location>
        <begin position="1"/>
        <end position="315"/>
    </location>
</feature>
<feature type="region of interest" description="Necessary for endoplasmic reticulum localization" evidence="1">
    <location>
        <begin position="236"/>
        <end position="315"/>
    </location>
</feature>
<feature type="region of interest" description="Interaction with UBQLN1" evidence="2">
    <location>
        <begin position="243"/>
        <end position="315"/>
    </location>
</feature>
<feature type="region of interest" description="Disordered" evidence="3">
    <location>
        <begin position="256"/>
        <end position="282"/>
    </location>
</feature>
<feature type="region of interest" description="Necessary for cytoplasmic retention" evidence="1">
    <location>
        <begin position="282"/>
        <end position="315"/>
    </location>
</feature>
<feature type="compositionally biased region" description="Pro residues" evidence="3">
    <location>
        <begin position="271"/>
        <end position="282"/>
    </location>
</feature>
<feature type="active site" description="Proton donor/acceptor" evidence="1">
    <location>
        <position position="195"/>
    </location>
</feature>
<feature type="binding site" evidence="1">
    <location>
        <position position="18"/>
    </location>
    <ligand>
        <name>Mg(2+)</name>
        <dbReference type="ChEBI" id="CHEBI:18420"/>
        <label>1</label>
    </ligand>
</feature>
<feature type="binding site" evidence="1">
    <location>
        <position position="18"/>
    </location>
    <ligand>
        <name>Mg(2+)</name>
        <dbReference type="ChEBI" id="CHEBI:18420"/>
        <label>2</label>
    </ligand>
</feature>
<feature type="binding site" evidence="1">
    <location>
        <begin position="20"/>
        <end position="21"/>
    </location>
    <ligand>
        <name>substrate</name>
    </ligand>
</feature>
<feature type="binding site" evidence="1">
    <location>
        <position position="20"/>
    </location>
    <ligand>
        <name>Mg(2+)</name>
        <dbReference type="ChEBI" id="CHEBI:18420"/>
        <label>1</label>
    </ligand>
</feature>
<feature type="binding site" evidence="1">
    <location>
        <position position="129"/>
    </location>
    <ligand>
        <name>substrate</name>
    </ligand>
</feature>
<feature type="binding site" evidence="1">
    <location>
        <position position="200"/>
    </location>
    <ligand>
        <name>Mg(2+)</name>
        <dbReference type="ChEBI" id="CHEBI:18420"/>
        <label>1</label>
    </ligand>
</feature>
<feature type="binding site" evidence="1">
    <location>
        <position position="200"/>
    </location>
    <ligand>
        <name>substrate</name>
    </ligand>
</feature>
<feature type="modified residue" description="Phosphoserine" evidence="2">
    <location>
        <position position="78"/>
    </location>
</feature>
<feature type="modified residue" description="Phosphoserine" evidence="2">
    <location>
        <position position="167"/>
    </location>
</feature>
<keyword id="KW-0131">Cell cycle</keyword>
<keyword id="KW-0963">Cytoplasm</keyword>
<keyword id="KW-0903">Direct protein sequencing</keyword>
<keyword id="KW-0256">Endoplasmic reticulum</keyword>
<keyword id="KW-0269">Exonuclease</keyword>
<keyword id="KW-0378">Hydrolase</keyword>
<keyword id="KW-0460">Magnesium</keyword>
<keyword id="KW-0472">Membrane</keyword>
<keyword id="KW-0479">Metal-binding</keyword>
<keyword id="KW-0540">Nuclease</keyword>
<keyword id="KW-0539">Nucleus</keyword>
<keyword id="KW-0597">Phosphoprotein</keyword>
<keyword id="KW-1185">Reference proteome</keyword>
<keyword id="KW-0832">Ubl conjugation</keyword>